<proteinExistence type="inferred from homology"/>
<protein>
    <recommendedName>
        <fullName evidence="1">Phenylalanine--tRNA ligase alpha subunit</fullName>
        <ecNumber evidence="1">6.1.1.20</ecNumber>
    </recommendedName>
    <alternativeName>
        <fullName evidence="1">Phenylalanyl-tRNA synthetase alpha subunit</fullName>
        <shortName evidence="1">PheRS</shortName>
    </alternativeName>
</protein>
<accession>Q15SX7</accession>
<reference key="1">
    <citation type="submission" date="2006-06" db="EMBL/GenBank/DDBJ databases">
        <title>Complete sequence of Pseudoalteromonas atlantica T6c.</title>
        <authorList>
            <consortium name="US DOE Joint Genome Institute"/>
            <person name="Copeland A."/>
            <person name="Lucas S."/>
            <person name="Lapidus A."/>
            <person name="Barry K."/>
            <person name="Detter J.C."/>
            <person name="Glavina del Rio T."/>
            <person name="Hammon N."/>
            <person name="Israni S."/>
            <person name="Dalin E."/>
            <person name="Tice H."/>
            <person name="Pitluck S."/>
            <person name="Saunders E."/>
            <person name="Brettin T."/>
            <person name="Bruce D."/>
            <person name="Han C."/>
            <person name="Tapia R."/>
            <person name="Gilna P."/>
            <person name="Schmutz J."/>
            <person name="Larimer F."/>
            <person name="Land M."/>
            <person name="Hauser L."/>
            <person name="Kyrpides N."/>
            <person name="Kim E."/>
            <person name="Karls A.C."/>
            <person name="Bartlett D."/>
            <person name="Higgins B.P."/>
            <person name="Richardson P."/>
        </authorList>
    </citation>
    <scope>NUCLEOTIDE SEQUENCE [LARGE SCALE GENOMIC DNA]</scope>
    <source>
        <strain>T6c / ATCC BAA-1087</strain>
    </source>
</reference>
<dbReference type="EC" id="6.1.1.20" evidence="1"/>
<dbReference type="EMBL" id="CP000388">
    <property type="protein sequence ID" value="ABG41011.1"/>
    <property type="molecule type" value="Genomic_DNA"/>
</dbReference>
<dbReference type="RefSeq" id="WP_011575281.1">
    <property type="nucleotide sequence ID" value="NC_008228.1"/>
</dbReference>
<dbReference type="SMR" id="Q15SX7"/>
<dbReference type="STRING" id="342610.Patl_2495"/>
<dbReference type="KEGG" id="pat:Patl_2495"/>
<dbReference type="eggNOG" id="COG0016">
    <property type="taxonomic scope" value="Bacteria"/>
</dbReference>
<dbReference type="HOGENOM" id="CLU_025086_0_1_6"/>
<dbReference type="OrthoDB" id="9800719at2"/>
<dbReference type="Proteomes" id="UP000001981">
    <property type="component" value="Chromosome"/>
</dbReference>
<dbReference type="GO" id="GO:0005737">
    <property type="term" value="C:cytoplasm"/>
    <property type="evidence" value="ECO:0007669"/>
    <property type="project" value="UniProtKB-SubCell"/>
</dbReference>
<dbReference type="GO" id="GO:0005524">
    <property type="term" value="F:ATP binding"/>
    <property type="evidence" value="ECO:0007669"/>
    <property type="project" value="UniProtKB-UniRule"/>
</dbReference>
<dbReference type="GO" id="GO:0000287">
    <property type="term" value="F:magnesium ion binding"/>
    <property type="evidence" value="ECO:0007669"/>
    <property type="project" value="UniProtKB-UniRule"/>
</dbReference>
<dbReference type="GO" id="GO:0004826">
    <property type="term" value="F:phenylalanine-tRNA ligase activity"/>
    <property type="evidence" value="ECO:0007669"/>
    <property type="project" value="UniProtKB-UniRule"/>
</dbReference>
<dbReference type="GO" id="GO:0000049">
    <property type="term" value="F:tRNA binding"/>
    <property type="evidence" value="ECO:0007669"/>
    <property type="project" value="InterPro"/>
</dbReference>
<dbReference type="GO" id="GO:0006432">
    <property type="term" value="P:phenylalanyl-tRNA aminoacylation"/>
    <property type="evidence" value="ECO:0007669"/>
    <property type="project" value="UniProtKB-UniRule"/>
</dbReference>
<dbReference type="CDD" id="cd00496">
    <property type="entry name" value="PheRS_alpha_core"/>
    <property type="match status" value="1"/>
</dbReference>
<dbReference type="FunFam" id="3.30.930.10:FF:000003">
    <property type="entry name" value="Phenylalanine--tRNA ligase alpha subunit"/>
    <property type="match status" value="1"/>
</dbReference>
<dbReference type="Gene3D" id="3.30.930.10">
    <property type="entry name" value="Bira Bifunctional Protein, Domain 2"/>
    <property type="match status" value="1"/>
</dbReference>
<dbReference type="HAMAP" id="MF_00281">
    <property type="entry name" value="Phe_tRNA_synth_alpha1"/>
    <property type="match status" value="1"/>
</dbReference>
<dbReference type="InterPro" id="IPR006195">
    <property type="entry name" value="aa-tRNA-synth_II"/>
</dbReference>
<dbReference type="InterPro" id="IPR045864">
    <property type="entry name" value="aa-tRNA-synth_II/BPL/LPL"/>
</dbReference>
<dbReference type="InterPro" id="IPR004529">
    <property type="entry name" value="Phe-tRNA-synth_IIc_asu"/>
</dbReference>
<dbReference type="InterPro" id="IPR004188">
    <property type="entry name" value="Phe-tRNA_ligase_II_N"/>
</dbReference>
<dbReference type="InterPro" id="IPR022911">
    <property type="entry name" value="Phe_tRNA_ligase_alpha1_bac"/>
</dbReference>
<dbReference type="InterPro" id="IPR002319">
    <property type="entry name" value="Phenylalanyl-tRNA_Synthase"/>
</dbReference>
<dbReference type="InterPro" id="IPR010978">
    <property type="entry name" value="tRNA-bd_arm"/>
</dbReference>
<dbReference type="NCBIfam" id="TIGR00468">
    <property type="entry name" value="pheS"/>
    <property type="match status" value="1"/>
</dbReference>
<dbReference type="PANTHER" id="PTHR11538:SF41">
    <property type="entry name" value="PHENYLALANINE--TRNA LIGASE, MITOCHONDRIAL"/>
    <property type="match status" value="1"/>
</dbReference>
<dbReference type="PANTHER" id="PTHR11538">
    <property type="entry name" value="PHENYLALANYL-TRNA SYNTHETASE"/>
    <property type="match status" value="1"/>
</dbReference>
<dbReference type="Pfam" id="PF02912">
    <property type="entry name" value="Phe_tRNA-synt_N"/>
    <property type="match status" value="1"/>
</dbReference>
<dbReference type="Pfam" id="PF01409">
    <property type="entry name" value="tRNA-synt_2d"/>
    <property type="match status" value="1"/>
</dbReference>
<dbReference type="SUPFAM" id="SSF55681">
    <property type="entry name" value="Class II aaRS and biotin synthetases"/>
    <property type="match status" value="1"/>
</dbReference>
<dbReference type="SUPFAM" id="SSF46589">
    <property type="entry name" value="tRNA-binding arm"/>
    <property type="match status" value="1"/>
</dbReference>
<dbReference type="PROSITE" id="PS50862">
    <property type="entry name" value="AA_TRNA_LIGASE_II"/>
    <property type="match status" value="1"/>
</dbReference>
<evidence type="ECO:0000255" key="1">
    <source>
        <dbReference type="HAMAP-Rule" id="MF_00281"/>
    </source>
</evidence>
<gene>
    <name evidence="1" type="primary">pheS</name>
    <name type="ordered locus">Patl_2495</name>
</gene>
<feature type="chain" id="PRO_1000006872" description="Phenylalanine--tRNA ligase alpha subunit">
    <location>
        <begin position="1"/>
        <end position="326"/>
    </location>
</feature>
<feature type="binding site" evidence="1">
    <location>
        <position position="251"/>
    </location>
    <ligand>
        <name>Mg(2+)</name>
        <dbReference type="ChEBI" id="CHEBI:18420"/>
        <note>shared with beta subunit</note>
    </ligand>
</feature>
<keyword id="KW-0030">Aminoacyl-tRNA synthetase</keyword>
<keyword id="KW-0067">ATP-binding</keyword>
<keyword id="KW-0963">Cytoplasm</keyword>
<keyword id="KW-0436">Ligase</keyword>
<keyword id="KW-0460">Magnesium</keyword>
<keyword id="KW-0479">Metal-binding</keyword>
<keyword id="KW-0547">Nucleotide-binding</keyword>
<keyword id="KW-0648">Protein biosynthesis</keyword>
<comment type="catalytic activity">
    <reaction evidence="1">
        <text>tRNA(Phe) + L-phenylalanine + ATP = L-phenylalanyl-tRNA(Phe) + AMP + diphosphate + H(+)</text>
        <dbReference type="Rhea" id="RHEA:19413"/>
        <dbReference type="Rhea" id="RHEA-COMP:9668"/>
        <dbReference type="Rhea" id="RHEA-COMP:9699"/>
        <dbReference type="ChEBI" id="CHEBI:15378"/>
        <dbReference type="ChEBI" id="CHEBI:30616"/>
        <dbReference type="ChEBI" id="CHEBI:33019"/>
        <dbReference type="ChEBI" id="CHEBI:58095"/>
        <dbReference type="ChEBI" id="CHEBI:78442"/>
        <dbReference type="ChEBI" id="CHEBI:78531"/>
        <dbReference type="ChEBI" id="CHEBI:456215"/>
        <dbReference type="EC" id="6.1.1.20"/>
    </reaction>
</comment>
<comment type="cofactor">
    <cofactor evidence="1">
        <name>Mg(2+)</name>
        <dbReference type="ChEBI" id="CHEBI:18420"/>
    </cofactor>
    <text evidence="1">Binds 2 magnesium ions per tetramer.</text>
</comment>
<comment type="subunit">
    <text evidence="1">Tetramer of two alpha and two beta subunits.</text>
</comment>
<comment type="subcellular location">
    <subcellularLocation>
        <location evidence="1">Cytoplasm</location>
    </subcellularLocation>
</comment>
<comment type="similarity">
    <text evidence="1">Belongs to the class-II aminoacyl-tRNA synthetase family. Phe-tRNA synthetase alpha subunit type 1 subfamily.</text>
</comment>
<sequence>MDLDAIIKEAETQINVAQDASTLDAVRVDFMGKKGRMTELLKGLGKLSNEERPAAGQKINQAKQQIQQLIHQRGELLREQEMNSKLAAESIDVSLPGRTTEMGGLHPVTRTINRIESFFAELGFSVKTGPEIEDGFHNFDALNIPANHPARADHDTFYFNPDVMLRTQTSGVQIRTMEAEQPPLRIISPGRVYRNDYDQTHTPMFHQVEGLMVDKNVSFTQLKGILHDFLNNFFEADLQVRFRPSYFPFTEPSAEVDVMGKNGKWLEVLGCGMVHPNVLRAVNIDPEVYTGFAFGMGVERLTMLRYGVNDLRAFFENDLRFLKQFK</sequence>
<name>SYFA_PSEA6</name>
<organism>
    <name type="scientific">Pseudoalteromonas atlantica (strain T6c / ATCC BAA-1087)</name>
    <dbReference type="NCBI Taxonomy" id="3042615"/>
    <lineage>
        <taxon>Bacteria</taxon>
        <taxon>Pseudomonadati</taxon>
        <taxon>Pseudomonadota</taxon>
        <taxon>Gammaproteobacteria</taxon>
        <taxon>Alteromonadales</taxon>
        <taxon>Alteromonadaceae</taxon>
        <taxon>Paraglaciecola</taxon>
    </lineage>
</organism>